<organismHost>
    <name type="scientific">Homo sapiens</name>
    <name type="common">Human</name>
    <dbReference type="NCBI Taxonomy" id="9606"/>
</organismHost>
<protein>
    <recommendedName>
        <fullName>Protein C</fullName>
    </recommendedName>
</protein>
<keyword id="KW-0945">Host-virus interaction</keyword>
<keyword id="KW-1090">Inhibition of host innate immune response by virus</keyword>
<keyword id="KW-1114">Inhibition of host interferon signaling pathway by virus</keyword>
<keyword id="KW-1105">Inhibition of host STAT1 by virus</keyword>
<keyword id="KW-1106">Inhibition of host STAT2 by virus</keyword>
<keyword id="KW-0922">Interferon antiviral system evasion</keyword>
<keyword id="KW-0899">Viral immunoevasion</keyword>
<organism>
    <name type="scientific">Human parainfluenza 1 virus (strain CI-14/83)</name>
    <name type="common">HPIV-1</name>
    <dbReference type="NCBI Taxonomy" id="31606"/>
    <lineage>
        <taxon>Viruses</taxon>
        <taxon>Riboviria</taxon>
        <taxon>Orthornavirae</taxon>
        <taxon>Negarnaviricota</taxon>
        <taxon>Haploviricotina</taxon>
        <taxon>Monjiviricetes</taxon>
        <taxon>Mononegavirales</taxon>
        <taxon>Paramyxoviridae</taxon>
        <taxon>Feraresvirinae</taxon>
        <taxon>Respirovirus</taxon>
        <taxon>Respirovirus laryngotracheitidis</taxon>
    </lineage>
</organism>
<evidence type="ECO:0000256" key="1">
    <source>
        <dbReference type="SAM" id="MobiDB-lite"/>
    </source>
</evidence>
<evidence type="ECO:0000305" key="2"/>
<dbReference type="EMBL" id="M74080">
    <property type="protein sequence ID" value="AAA46831.1"/>
    <property type="molecule type" value="Genomic_RNA"/>
</dbReference>
<dbReference type="PIR" id="F40234">
    <property type="entry name" value="MNNZ83"/>
</dbReference>
<dbReference type="SMR" id="P32535"/>
<dbReference type="GO" id="GO:0052170">
    <property type="term" value="P:symbiont-mediated suppression of host innate immune response"/>
    <property type="evidence" value="ECO:0007669"/>
    <property type="project" value="UniProtKB-KW"/>
</dbReference>
<dbReference type="GO" id="GO:0039563">
    <property type="term" value="P:symbiont-mediated suppression of host JAK-STAT cascade via inhibition of STAT1 activity"/>
    <property type="evidence" value="ECO:0000250"/>
    <property type="project" value="UniProtKB"/>
</dbReference>
<dbReference type="GO" id="GO:0039564">
    <property type="term" value="P:symbiont-mediated suppression of host JAK-STAT cascade via inhibition of STAT2 activity"/>
    <property type="evidence" value="ECO:0007669"/>
    <property type="project" value="UniProtKB-KW"/>
</dbReference>
<dbReference type="GO" id="GO:0039502">
    <property type="term" value="P:symbiont-mediated suppression of host type I interferon-mediated signaling pathway"/>
    <property type="evidence" value="ECO:0007669"/>
    <property type="project" value="UniProtKB-KW"/>
</dbReference>
<dbReference type="InterPro" id="IPR002608">
    <property type="entry name" value="Paramyxo_C"/>
</dbReference>
<dbReference type="Pfam" id="PF01692">
    <property type="entry name" value="Paramyxo_C"/>
    <property type="match status" value="1"/>
</dbReference>
<proteinExistence type="inferred from homology"/>
<accession>P32535</accession>
<sequence>MPSFLRGILRPKERHHENKNHSQMSSDSLTSSYPTSPPKLEKTEAGSIISSTTQKKTSHHANLTITTKTEQSQRRPKIIDQVRRVESLGEQVSQKQRHMLESLINKVYTGPLGEELVQTLYLRIWAMKETPESTKILQMREDIRDQYLRMKTERWLRTLIRGKKTKLRDFQKRYEEVHPYLMMERVEQIIMEEAWKLAAHIVQE</sequence>
<comment type="similarity">
    <text evidence="2">Belongs to the respirovirus protein C family.</text>
</comment>
<gene>
    <name type="primary">P/V/C</name>
</gene>
<feature type="chain" id="PRO_0000142801" description="Protein C">
    <location>
        <begin position="1"/>
        <end position="204"/>
    </location>
</feature>
<feature type="region of interest" description="Disordered" evidence="1">
    <location>
        <begin position="1"/>
        <end position="75"/>
    </location>
</feature>
<feature type="compositionally biased region" description="Basic and acidic residues" evidence="1">
    <location>
        <begin position="10"/>
        <end position="20"/>
    </location>
</feature>
<feature type="compositionally biased region" description="Low complexity" evidence="1">
    <location>
        <begin position="25"/>
        <end position="34"/>
    </location>
</feature>
<feature type="compositionally biased region" description="Polar residues" evidence="1">
    <location>
        <begin position="60"/>
        <end position="70"/>
    </location>
</feature>
<name>C_PI1HE</name>
<reference key="1">
    <citation type="journal article" date="1992" name="Virology">
        <title>The P genes of human parainfluenza virus type 1 clinical isolates are polycistronic and microheterogeneous.</title>
        <authorList>
            <person name="Power U.F."/>
            <person name="Ryan K.W."/>
            <person name="Portner A."/>
        </authorList>
    </citation>
    <scope>NUCLEOTIDE SEQUENCE [GENOMIC RNA]</scope>
</reference>